<feature type="signal peptide" evidence="4">
    <location>
        <begin position="1"/>
        <end position="24"/>
    </location>
</feature>
<feature type="chain" id="PRO_5004329932" description="Aeromonas extracellular serine protease">
    <location>
        <begin position="25"/>
        <end position="624"/>
    </location>
</feature>
<feature type="domain" description="Peptidase S8" evidence="2">
    <location>
        <begin position="59"/>
        <end position="421"/>
    </location>
</feature>
<feature type="domain" description="P/Homo B" evidence="1">
    <location>
        <begin position="456"/>
        <end position="622"/>
    </location>
</feature>
<feature type="region of interest" description="Disordered" evidence="3">
    <location>
        <begin position="116"/>
        <end position="140"/>
    </location>
</feature>
<feature type="active site" description="Charge relay system" evidence="2">
    <location>
        <position position="102"/>
    </location>
</feature>
<feature type="active site" description="Charge relay system" evidence="2">
    <location>
        <position position="139"/>
    </location>
</feature>
<feature type="active site" description="Charge relay system" evidence="2">
    <location>
        <position position="360"/>
    </location>
</feature>
<feature type="binding site" evidence="12 14 21 22">
    <location>
        <position position="53"/>
    </location>
    <ligand>
        <name>Ca(2+)</name>
        <dbReference type="ChEBI" id="CHEBI:29108"/>
        <label>1</label>
    </ligand>
</feature>
<feature type="binding site" evidence="12 14 21 22">
    <location>
        <position position="111"/>
    </location>
    <ligand>
        <name>Ca(2+)</name>
        <dbReference type="ChEBI" id="CHEBI:29108"/>
        <label>1</label>
    </ligand>
</feature>
<feature type="binding site" evidence="12 14 21 22">
    <location>
        <position position="150"/>
    </location>
    <ligand>
        <name>Ca(2+)</name>
        <dbReference type="ChEBI" id="CHEBI:29108"/>
        <label>1</label>
    </ligand>
</feature>
<feature type="binding site" evidence="12 14 21 22">
    <location>
        <position position="152"/>
    </location>
    <ligand>
        <name>Ca(2+)</name>
        <dbReference type="ChEBI" id="CHEBI:29108"/>
        <label>1</label>
    </ligand>
</feature>
<feature type="binding site" evidence="12 14 21 22">
    <location>
        <position position="154"/>
    </location>
    <ligand>
        <name>Ca(2+)</name>
        <dbReference type="ChEBI" id="CHEBI:29108"/>
        <label>1</label>
    </ligand>
</feature>
<feature type="binding site" evidence="12 14 21 22">
    <location>
        <position position="156"/>
    </location>
    <ligand>
        <name>Ca(2+)</name>
        <dbReference type="ChEBI" id="CHEBI:29108"/>
        <label>1</label>
    </ligand>
</feature>
<feature type="binding site" evidence="12 14 21 22">
    <location>
        <position position="321"/>
    </location>
    <ligand>
        <name>Ca(2+)</name>
        <dbReference type="ChEBI" id="CHEBI:29108"/>
        <label>2</label>
    </ligand>
</feature>
<feature type="binding site" evidence="12 14 21 22">
    <location>
        <position position="322"/>
    </location>
    <ligand>
        <name>Ca(2+)</name>
        <dbReference type="ChEBI" id="CHEBI:29108"/>
        <label>2</label>
    </ligand>
</feature>
<feature type="binding site" evidence="12 14 21 22">
    <location>
        <position position="324"/>
    </location>
    <ligand>
        <name>Ca(2+)</name>
        <dbReference type="ChEBI" id="CHEBI:29108"/>
        <label>2</label>
    </ligand>
</feature>
<feature type="binding site" evidence="12 14 21 22">
    <location>
        <position position="327"/>
    </location>
    <ligand>
        <name>Ca(2+)</name>
        <dbReference type="ChEBI" id="CHEBI:29108"/>
        <label>2</label>
    </ligand>
</feature>
<feature type="binding site" evidence="12 14 21 22">
    <location>
        <position position="330"/>
    </location>
    <ligand>
        <name>Ca(2+)</name>
        <dbReference type="ChEBI" id="CHEBI:29108"/>
        <label>2</label>
    </ligand>
</feature>
<feature type="binding site" evidence="12 14 21 22">
    <location>
        <position position="350"/>
    </location>
    <ligand>
        <name>Ca(2+)</name>
        <dbReference type="ChEBI" id="CHEBI:29108"/>
        <label>2</label>
    </ligand>
</feature>
<feature type="binding site" evidence="12 14 21 22">
    <location>
        <position position="478"/>
    </location>
    <ligand>
        <name>Ca(2+)</name>
        <dbReference type="ChEBI" id="CHEBI:29108"/>
        <label>3</label>
    </ligand>
</feature>
<feature type="binding site" evidence="12 14 21 22">
    <location>
        <position position="512"/>
    </location>
    <ligand>
        <name>Ca(2+)</name>
        <dbReference type="ChEBI" id="CHEBI:29108"/>
        <label>3</label>
    </ligand>
</feature>
<feature type="binding site" evidence="12 14 21 22">
    <location>
        <position position="577"/>
    </location>
    <ligand>
        <name>Ca(2+)</name>
        <dbReference type="ChEBI" id="CHEBI:29108"/>
        <label>3</label>
    </ligand>
</feature>
<feature type="binding site" evidence="12 14 21 22">
    <location>
        <position position="579"/>
    </location>
    <ligand>
        <name>Ca(2+)</name>
        <dbReference type="ChEBI" id="CHEBI:29108"/>
        <label>3</label>
    </ligand>
</feature>
<feature type="binding site" evidence="12 14 21 22">
    <location>
        <position position="602"/>
    </location>
    <ligand>
        <name>Ca(2+)</name>
        <dbReference type="ChEBI" id="CHEBI:29108"/>
        <label>3</label>
    </ligand>
</feature>
<feature type="binding site" evidence="12 14 21 22">
    <location>
        <position position="603"/>
    </location>
    <ligand>
        <name>Ca(2+)</name>
        <dbReference type="ChEBI" id="CHEBI:29108"/>
        <label>3</label>
    </ligand>
</feature>
<feature type="disulfide bond" evidence="12 14 21 22">
    <location>
        <begin position="28"/>
        <end position="48"/>
    </location>
</feature>
<feature type="disulfide bond" evidence="12 14 21 22">
    <location>
        <begin position="325"/>
        <end position="350"/>
    </location>
</feature>
<feature type="helix" evidence="24">
    <location>
        <begin position="56"/>
        <end position="58"/>
    </location>
</feature>
<feature type="turn" evidence="24">
    <location>
        <begin position="60"/>
        <end position="62"/>
    </location>
</feature>
<feature type="helix" evidence="24">
    <location>
        <begin position="84"/>
        <end position="88"/>
    </location>
</feature>
<feature type="strand" evidence="24">
    <location>
        <begin position="97"/>
        <end position="103"/>
    </location>
</feature>
<feature type="turn" evidence="24">
    <location>
        <begin position="110"/>
        <end position="112"/>
    </location>
</feature>
<feature type="helix" evidence="24">
    <location>
        <begin position="113"/>
        <end position="115"/>
    </location>
</feature>
<feature type="turn" evidence="24">
    <location>
        <begin position="123"/>
        <end position="125"/>
    </location>
</feature>
<feature type="strand" evidence="23">
    <location>
        <begin position="126"/>
        <end position="128"/>
    </location>
</feature>
<feature type="helix" evidence="24">
    <location>
        <begin position="139"/>
        <end position="148"/>
    </location>
</feature>
<feature type="strand" evidence="24">
    <location>
        <begin position="151"/>
        <end position="155"/>
    </location>
</feature>
<feature type="strand" evidence="24">
    <location>
        <begin position="164"/>
        <end position="168"/>
    </location>
</feature>
<feature type="helix" evidence="24">
    <location>
        <begin position="179"/>
        <end position="185"/>
    </location>
</feature>
<feature type="turn" evidence="24">
    <location>
        <begin position="186"/>
        <end position="188"/>
    </location>
</feature>
<feature type="turn" evidence="24">
    <location>
        <begin position="190"/>
        <end position="194"/>
    </location>
</feature>
<feature type="strand" evidence="24">
    <location>
        <begin position="196"/>
        <end position="200"/>
    </location>
</feature>
<feature type="helix" evidence="24">
    <location>
        <begin position="215"/>
        <end position="229"/>
    </location>
</feature>
<feature type="strand" evidence="24">
    <location>
        <begin position="235"/>
        <end position="239"/>
    </location>
</feature>
<feature type="strand" evidence="24">
    <location>
        <begin position="244"/>
        <end position="249"/>
    </location>
</feature>
<feature type="strand" evidence="24">
    <location>
        <begin position="252"/>
        <end position="259"/>
    </location>
</feature>
<feature type="strand" evidence="24">
    <location>
        <begin position="265"/>
        <end position="267"/>
    </location>
</feature>
<feature type="helix" evidence="24">
    <location>
        <begin position="272"/>
        <end position="275"/>
    </location>
</feature>
<feature type="strand" evidence="24">
    <location>
        <begin position="276"/>
        <end position="285"/>
    </location>
</feature>
<feature type="strand" evidence="24">
    <location>
        <begin position="289"/>
        <end position="291"/>
    </location>
</feature>
<feature type="strand" evidence="24">
    <location>
        <begin position="301"/>
        <end position="306"/>
    </location>
</feature>
<feature type="strand" evidence="24">
    <location>
        <begin position="311"/>
        <end position="314"/>
    </location>
</feature>
<feature type="strand" evidence="24">
    <location>
        <begin position="317"/>
        <end position="320"/>
    </location>
</feature>
<feature type="strand" evidence="24">
    <location>
        <begin position="322"/>
        <end position="324"/>
    </location>
</feature>
<feature type="strand" evidence="24">
    <location>
        <begin position="327"/>
        <end position="330"/>
    </location>
</feature>
<feature type="turn" evidence="24">
    <location>
        <begin position="339"/>
        <end position="342"/>
    </location>
</feature>
<feature type="turn" evidence="24">
    <location>
        <begin position="344"/>
        <end position="346"/>
    </location>
</feature>
<feature type="strand" evidence="24">
    <location>
        <begin position="352"/>
        <end position="356"/>
    </location>
</feature>
<feature type="helix" evidence="24">
    <location>
        <begin position="359"/>
        <end position="376"/>
    </location>
</feature>
<feature type="helix" evidence="24">
    <location>
        <begin position="382"/>
        <end position="392"/>
    </location>
</feature>
<feature type="strand" evidence="24">
    <location>
        <begin position="403"/>
        <end position="408"/>
    </location>
</feature>
<feature type="strand" evidence="24">
    <location>
        <begin position="414"/>
        <end position="420"/>
    </location>
</feature>
<feature type="strand" evidence="23">
    <location>
        <begin position="423"/>
        <end position="425"/>
    </location>
</feature>
<feature type="strand" evidence="24">
    <location>
        <begin position="431"/>
        <end position="433"/>
    </location>
</feature>
<feature type="turn" evidence="24">
    <location>
        <begin position="434"/>
        <end position="436"/>
    </location>
</feature>
<feature type="helix" evidence="24">
    <location>
        <begin position="443"/>
        <end position="450"/>
    </location>
</feature>
<feature type="strand" evidence="24">
    <location>
        <begin position="465"/>
        <end position="468"/>
    </location>
</feature>
<feature type="helix" evidence="24">
    <location>
        <begin position="471"/>
        <end position="474"/>
    </location>
</feature>
<feature type="strand" evidence="24">
    <location>
        <begin position="484"/>
        <end position="490"/>
    </location>
</feature>
<feature type="strand" evidence="24">
    <location>
        <begin position="495"/>
        <end position="506"/>
    </location>
</feature>
<feature type="helix" evidence="24">
    <location>
        <begin position="510"/>
        <end position="512"/>
    </location>
</feature>
<feature type="strand" evidence="24">
    <location>
        <begin position="513"/>
        <end position="518"/>
    </location>
</feature>
<feature type="strand" evidence="24">
    <location>
        <begin position="524"/>
        <end position="528"/>
    </location>
</feature>
<feature type="helix" evidence="24">
    <location>
        <begin position="536"/>
        <end position="544"/>
    </location>
</feature>
<feature type="strand" evidence="24">
    <location>
        <begin position="551"/>
        <end position="559"/>
    </location>
</feature>
<feature type="turn" evidence="24">
    <location>
        <begin position="561"/>
        <end position="564"/>
    </location>
</feature>
<feature type="strand" evidence="24">
    <location>
        <begin position="569"/>
        <end position="577"/>
    </location>
</feature>
<feature type="strand" evidence="24">
    <location>
        <begin position="583"/>
        <end position="589"/>
    </location>
</feature>
<feature type="turn" evidence="24">
    <location>
        <begin position="590"/>
        <end position="592"/>
    </location>
</feature>
<feature type="strand" evidence="24">
    <location>
        <begin position="595"/>
        <end position="600"/>
    </location>
</feature>
<feature type="strand" evidence="24">
    <location>
        <begin position="607"/>
        <end position="619"/>
    </location>
</feature>
<accession>Q9L5A4</accession>
<name>ASP_AERSO</name>
<comment type="function">
    <text evidence="4 5 7 8 9 10 11 12 14">Exhibits serine protease activity (PubMed:11092244, PubMed:12153115, PubMed:16487335, PubMed:18067862, PubMed:18462393, PubMed:19654332). Preferentially cleaves the peptide bond following two basic residues, one of which is Lys, but does not recognize the bond following a single basic residue (PubMed:16487335). Probable potent virulence factor that cleaves various host plasma proteins, including prekallikrein, prothrombin and fibrinogen (PubMed:16487335, PubMed:17142774, PubMed:18067862, PubMed:18462393, PubMed:19654332). ASP induces vascular leakage and reduction in blood pressure by activating the host plasma kallikrein/kinin system (PubMed:12153115, PubMed:16487335, PubMed:17142774). It affects the host coagulation system during infection through activation of prothrombin to alpha-thrombin and degradation of fibrinogen, which impairs plasma clottability (PubMed:18067862, PubMed:18462393). It also hydrolyzes the complement component C5, releasing the C5a anaphylatoxin, which causes the formation of pus and edema (PubMed:18714034). In addition, degrades its external chaperone ORF2 after the secretion of the ASP-ORF2 complex (PubMed:25784551).</text>
</comment>
<comment type="catalytic activity">
    <reaction evidence="7 9 10 12">
        <text>Cleavage of -Lys-Lys-|-Xaa and -Lys-Arg-|-Xaa bonds.</text>
        <dbReference type="EC" id="3.4.21.121"/>
    </reaction>
</comment>
<comment type="cofactor">
    <cofactor evidence="19 20">
        <name>Ca(2+)</name>
        <dbReference type="ChEBI" id="CHEBI:29108"/>
    </cofactor>
    <text evidence="12 14">Binds 3 calcium ions per subunit.</text>
</comment>
<comment type="activity regulation">
    <text evidence="4 5 6 13 14">Folding, maturation and production of the active form of the protease by the cell requires a protein (ORF2), encoded just downstream of asp, which acts as a chaperone (PubMed:11092244, PubMed:12446656, PubMed:25784551). Formation of a complex with ORF2 in the periplasm also inactivates the protease activity and likely protects ASP from intrinsic proteases (PubMed:25784551). In vitro, protease activity is inhibited by human alpha-2-macroglobulin, suggesting that this inhibitor can impede ASP virulence activities in A.sobria infection sites (PubMed:23089609). However, slow ASP inhibition by alpha-2-macroglobulin in plasma may indicate insufficient ASP control in vivo (PubMed:23089609). Activity is inhibited by serine protease inhibitors such as 4-(2-aminoethyl)-benzenesulfonyl fluoride (AEBSF) and diisopropyl fluorophosphate (DFP) (PubMed:11092244, PubMed:12153115). Not inhibited by metallo-protease inhibitors and cysteine protease inhibitors (PubMed:12153115). The treatment with reagents to modify sulfhydryl group do not reduce the activity (PubMed:12153115).</text>
</comment>
<comment type="biophysicochemical properties">
    <phDependence>
        <text evidence="5">Optimum pH is 7.5.</text>
    </phDependence>
</comment>
<comment type="subunit">
    <text evidence="6 14">Forms a complex with the chaperone ORF2 in the periplasm (PubMed:12446656, PubMed:25784551). After translocation of the ASP-ORF2 complex from the periplasm to the extracellular space, the complex is dissociated in a pH-dependent manner (PubMed:25784551).</text>
</comment>
<comment type="subcellular location">
    <subcellularLocation>
        <location evidence="6 14">Periplasm</location>
    </subcellularLocation>
    <subcellularLocation>
        <location evidence="4 10 12 14">Secreted</location>
    </subcellularLocation>
    <text evidence="10 14">Translocated from the periplasm to the extracellular space as a complex with ORF2 (PubMed:25784551). Secreted at the infection sites or in the circulation (PubMed:18462393).</text>
</comment>
<comment type="domain">
    <text evidence="12">Contains an N-terminal subtilisin domain and a C-terminal P-domain.</text>
</comment>
<comment type="disruption phenotype">
    <text evidence="10">Disruption mutant releases negligible serine protease activity and does not affect plasma clotting.</text>
</comment>
<comment type="similarity">
    <text evidence="18">Belongs to the peptidase S8 family. Furin subfamily.</text>
</comment>
<dbReference type="EC" id="3.4.21.121" evidence="7 9 10 12"/>
<dbReference type="EMBL" id="AF253471">
    <property type="protein sequence ID" value="AAF64521.2"/>
    <property type="molecule type" value="Genomic_DNA"/>
</dbReference>
<dbReference type="PDB" id="3HJR">
    <property type="method" value="X-ray"/>
    <property type="resolution" value="1.65 A"/>
    <property type="chains" value="A=25-624"/>
</dbReference>
<dbReference type="PDB" id="3WQB">
    <property type="method" value="X-ray"/>
    <property type="resolution" value="1.41 A"/>
    <property type="chains" value="A=25-624"/>
</dbReference>
<dbReference type="PDBsum" id="3HJR"/>
<dbReference type="PDBsum" id="3WQB"/>
<dbReference type="SMR" id="Q9L5A4"/>
<dbReference type="MEROPS" id="S08.125"/>
<dbReference type="KEGG" id="ag:AAF64521"/>
<dbReference type="BioCyc" id="MetaCyc:MONOMER-17932"/>
<dbReference type="BRENDA" id="3.4.21.121">
    <property type="organism ID" value="169"/>
</dbReference>
<dbReference type="EvolutionaryTrace" id="Q9L5A4"/>
<dbReference type="GO" id="GO:0005737">
    <property type="term" value="C:cytoplasm"/>
    <property type="evidence" value="ECO:0007669"/>
    <property type="project" value="UniProtKB-ARBA"/>
</dbReference>
<dbReference type="GO" id="GO:0012505">
    <property type="term" value="C:endomembrane system"/>
    <property type="evidence" value="ECO:0007669"/>
    <property type="project" value="UniProtKB-ARBA"/>
</dbReference>
<dbReference type="GO" id="GO:0005576">
    <property type="term" value="C:extracellular region"/>
    <property type="evidence" value="ECO:0007669"/>
    <property type="project" value="UniProtKB-SubCell"/>
</dbReference>
<dbReference type="GO" id="GO:0043231">
    <property type="term" value="C:intracellular membrane-bounded organelle"/>
    <property type="evidence" value="ECO:0007669"/>
    <property type="project" value="UniProtKB-ARBA"/>
</dbReference>
<dbReference type="GO" id="GO:0016020">
    <property type="term" value="C:membrane"/>
    <property type="evidence" value="ECO:0007669"/>
    <property type="project" value="TreeGrafter"/>
</dbReference>
<dbReference type="GO" id="GO:0042597">
    <property type="term" value="C:periplasmic space"/>
    <property type="evidence" value="ECO:0007669"/>
    <property type="project" value="UniProtKB-SubCell"/>
</dbReference>
<dbReference type="GO" id="GO:0046872">
    <property type="term" value="F:metal ion binding"/>
    <property type="evidence" value="ECO:0007669"/>
    <property type="project" value="UniProtKB-KW"/>
</dbReference>
<dbReference type="GO" id="GO:0004252">
    <property type="term" value="F:serine-type endopeptidase activity"/>
    <property type="evidence" value="ECO:0007669"/>
    <property type="project" value="InterPro"/>
</dbReference>
<dbReference type="GO" id="GO:0016485">
    <property type="term" value="P:protein processing"/>
    <property type="evidence" value="ECO:0007669"/>
    <property type="project" value="TreeGrafter"/>
</dbReference>
<dbReference type="CDD" id="cd04059">
    <property type="entry name" value="Peptidases_S8_Protein_convertases_Kexins_Furin-like"/>
    <property type="match status" value="1"/>
</dbReference>
<dbReference type="Gene3D" id="2.60.120.260">
    <property type="entry name" value="Galactose-binding domain-like"/>
    <property type="match status" value="1"/>
</dbReference>
<dbReference type="Gene3D" id="3.40.50.200">
    <property type="entry name" value="Peptidase S8/S53 domain"/>
    <property type="match status" value="1"/>
</dbReference>
<dbReference type="InterPro" id="IPR008979">
    <property type="entry name" value="Galactose-bd-like_sf"/>
</dbReference>
<dbReference type="InterPro" id="IPR034182">
    <property type="entry name" value="Kexin/furin"/>
</dbReference>
<dbReference type="InterPro" id="IPR002884">
    <property type="entry name" value="P_dom"/>
</dbReference>
<dbReference type="InterPro" id="IPR000209">
    <property type="entry name" value="Peptidase_S8/S53_dom"/>
</dbReference>
<dbReference type="InterPro" id="IPR036852">
    <property type="entry name" value="Peptidase_S8/S53_dom_sf"/>
</dbReference>
<dbReference type="InterPro" id="IPR023827">
    <property type="entry name" value="Peptidase_S8_Asp-AS"/>
</dbReference>
<dbReference type="InterPro" id="IPR022398">
    <property type="entry name" value="Peptidase_S8_His-AS"/>
</dbReference>
<dbReference type="InterPro" id="IPR023828">
    <property type="entry name" value="Peptidase_S8_Ser-AS"/>
</dbReference>
<dbReference type="InterPro" id="IPR015500">
    <property type="entry name" value="Peptidase_S8_subtilisin-rel"/>
</dbReference>
<dbReference type="PANTHER" id="PTHR42884:SF14">
    <property type="entry name" value="NEUROENDOCRINE CONVERTASE 1"/>
    <property type="match status" value="1"/>
</dbReference>
<dbReference type="PANTHER" id="PTHR42884">
    <property type="entry name" value="PROPROTEIN CONVERTASE SUBTILISIN/KEXIN-RELATED"/>
    <property type="match status" value="1"/>
</dbReference>
<dbReference type="Pfam" id="PF01483">
    <property type="entry name" value="P_proprotein"/>
    <property type="match status" value="1"/>
</dbReference>
<dbReference type="Pfam" id="PF00082">
    <property type="entry name" value="Peptidase_S8"/>
    <property type="match status" value="1"/>
</dbReference>
<dbReference type="PRINTS" id="PR00723">
    <property type="entry name" value="SUBTILISIN"/>
</dbReference>
<dbReference type="SUPFAM" id="SSF49785">
    <property type="entry name" value="Galactose-binding domain-like"/>
    <property type="match status" value="1"/>
</dbReference>
<dbReference type="SUPFAM" id="SSF52743">
    <property type="entry name" value="Subtilisin-like"/>
    <property type="match status" value="1"/>
</dbReference>
<dbReference type="PROSITE" id="PS51829">
    <property type="entry name" value="P_HOMO_B"/>
    <property type="match status" value="1"/>
</dbReference>
<dbReference type="PROSITE" id="PS51892">
    <property type="entry name" value="SUBTILASE"/>
    <property type="match status" value="1"/>
</dbReference>
<dbReference type="PROSITE" id="PS00136">
    <property type="entry name" value="SUBTILASE_ASP"/>
    <property type="match status" value="1"/>
</dbReference>
<dbReference type="PROSITE" id="PS00137">
    <property type="entry name" value="SUBTILASE_HIS"/>
    <property type="match status" value="1"/>
</dbReference>
<dbReference type="PROSITE" id="PS00138">
    <property type="entry name" value="SUBTILASE_SER"/>
    <property type="match status" value="1"/>
</dbReference>
<evidence type="ECO:0000255" key="1">
    <source>
        <dbReference type="PROSITE-ProRule" id="PRU01173"/>
    </source>
</evidence>
<evidence type="ECO:0000255" key="2">
    <source>
        <dbReference type="PROSITE-ProRule" id="PRU01240"/>
    </source>
</evidence>
<evidence type="ECO:0000256" key="3">
    <source>
        <dbReference type="SAM" id="MobiDB-lite"/>
    </source>
</evidence>
<evidence type="ECO:0000269" key="4">
    <source>
    </source>
</evidence>
<evidence type="ECO:0000269" key="5">
    <source>
    </source>
</evidence>
<evidence type="ECO:0000269" key="6">
    <source>
    </source>
</evidence>
<evidence type="ECO:0000269" key="7">
    <source>
    </source>
</evidence>
<evidence type="ECO:0000269" key="8">
    <source>
    </source>
</evidence>
<evidence type="ECO:0000269" key="9">
    <source>
    </source>
</evidence>
<evidence type="ECO:0000269" key="10">
    <source>
    </source>
</evidence>
<evidence type="ECO:0000269" key="11">
    <source>
    </source>
</evidence>
<evidence type="ECO:0000269" key="12">
    <source>
    </source>
</evidence>
<evidence type="ECO:0000269" key="13">
    <source>
    </source>
</evidence>
<evidence type="ECO:0000269" key="14">
    <source>
    </source>
</evidence>
<evidence type="ECO:0000303" key="15">
    <source>
    </source>
</evidence>
<evidence type="ECO:0000303" key="16">
    <source>
    </source>
</evidence>
<evidence type="ECO:0000303" key="17">
    <source>
    </source>
</evidence>
<evidence type="ECO:0000305" key="18"/>
<evidence type="ECO:0000305" key="19">
    <source>
    </source>
</evidence>
<evidence type="ECO:0000305" key="20">
    <source>
    </source>
</evidence>
<evidence type="ECO:0007744" key="21">
    <source>
        <dbReference type="PDB" id="3HJR"/>
    </source>
</evidence>
<evidence type="ECO:0007744" key="22">
    <source>
        <dbReference type="PDB" id="3WQB"/>
    </source>
</evidence>
<evidence type="ECO:0007829" key="23">
    <source>
        <dbReference type="PDB" id="3HJR"/>
    </source>
</evidence>
<evidence type="ECO:0007829" key="24">
    <source>
        <dbReference type="PDB" id="3WQB"/>
    </source>
</evidence>
<gene>
    <name evidence="17" type="primary">asp</name>
</gene>
<protein>
    <recommendedName>
        <fullName evidence="15">Aeromonas extracellular serine protease</fullName>
        <shortName evidence="16">ASP</shortName>
        <ecNumber evidence="7 9 10 12">3.4.21.121</ecNumber>
    </recommendedName>
    <alternativeName>
        <fullName evidence="18">Lys-Lys/Arg-Xaa endopeptidase</fullName>
    </alternativeName>
</protein>
<organism>
    <name type="scientific">Aeromonas sobria</name>
    <dbReference type="NCBI Taxonomy" id="646"/>
    <lineage>
        <taxon>Bacteria</taxon>
        <taxon>Pseudomonadati</taxon>
        <taxon>Pseudomonadota</taxon>
        <taxon>Gammaproteobacteria</taxon>
        <taxon>Aeromonadales</taxon>
        <taxon>Aeromonadaceae</taxon>
        <taxon>Aeromonas</taxon>
    </lineage>
</organism>
<sequence length="624" mass="66635">MKQTSLALAITALLSTLPSALVQANEGCAPLTGKESGMDIGRSSTERCLPGANPLQDQQWYLLNSGQDGFSARGGIAGNDLNLWWAHRTGVLGQGVNVAVVDDGLAIAHPDLADNVRPGSKNVVTGSDDPTPTDPDTAHGTSVSGIIAAVDNAIGTKGIAPRAQLQGFNLLDDNSQQLQKDWLYALGDSNASRDNRVFNQSYGMSVVDPRSANSLDQSQLDRLFEQQTLKAQGAAYIKAAGNGFNKIAAGGYVLNRTGNGPKLPFENSNLDPSNSNFWNLVVSALNADGVRSSYSSVGSNIFLSATGGEYGTDTPAMVTTDLPGCDMGYNRTDDPSTNRLHGNSQLDASCDYNGVMNGTSSATPSTSGAMALLMSAYPDLSVRDLRDLLARSATRVDAKHQPVMVSYTSSTGKVRDVKGLEGWERNAAGMWFSPTYGFGLIDVNKALELAANHQPLPPLVQLPWQKINVTGSAAAIADVGNSPTSSTTRIATPLTVEAVQVMVSLDHQRLPDLLIELVSPAGTRSILLSPFNSLVGQSLDQQQLGFVRTKGLRDMRMLSNKFYGESAQGTWRLEVTDVANGTRQVSLLNRETRERTTLTERNNRQPGKLISWSLRVLGHDANRS</sequence>
<keyword id="KW-0002">3D-structure</keyword>
<keyword id="KW-0106">Calcium</keyword>
<keyword id="KW-0903">Direct protein sequencing</keyword>
<keyword id="KW-1015">Disulfide bond</keyword>
<keyword id="KW-0378">Hydrolase</keyword>
<keyword id="KW-0479">Metal-binding</keyword>
<keyword id="KW-0574">Periplasm</keyword>
<keyword id="KW-0645">Protease</keyword>
<keyword id="KW-0964">Secreted</keyword>
<keyword id="KW-0720">Serine protease</keyword>
<keyword id="KW-0732">Signal</keyword>
<keyword id="KW-0843">Virulence</keyword>
<proteinExistence type="evidence at protein level"/>
<reference key="1">
    <citation type="journal article" date="2000" name="Microbiol. Immunol.">
        <title>Production of serine protease of Aeromonas sobria is controlled by the protein encoded by the gene lying adjacent to the 3' end of the protease gene.</title>
        <authorList>
            <person name="Okamoto K."/>
            <person name="Nomura T."/>
            <person name="Hamada M."/>
            <person name="Fukuda T."/>
            <person name="Noguchi Y."/>
            <person name="Fujii Y."/>
        </authorList>
    </citation>
    <scope>NUCLEOTIDE SEQUENCE [GENOMIC DNA]</scope>
    <scope>PROTEIN SEQUENCE OF 25-34</scope>
    <scope>FUNCTION</scope>
    <scope>ACTIVITY REGULATION</scope>
    <scope>SUBCELLULAR LOCATION</scope>
    <source>
        <strain>288</strain>
    </source>
</reference>
<reference key="2">
    <citation type="journal article" date="2002" name="Microbiol. Immunol.">
        <title>Physicochemical and biological properties of an extracellular serine protease of Aeromonas sobria.</title>
        <authorList>
            <person name="Yokoyama R."/>
            <person name="Fujii Y."/>
            <person name="Noguchi Y."/>
            <person name="Nomura T."/>
            <person name="Akita M."/>
            <person name="Setsu K."/>
            <person name="Yamamoto S."/>
            <person name="Okamoto K."/>
        </authorList>
    </citation>
    <scope>FUNCTION</scope>
    <scope>ACTIVITY REGULATION</scope>
    <scope>BIOPHYSICOCHEMICAL PROPERTIES</scope>
    <source>
        <strain>288</strain>
    </source>
</reference>
<reference key="3">
    <citation type="journal article" date="2002" name="J. Bacteriol.">
        <title>The protein encoded at the 3' end of the serine protease gene of Aeromonas sobria functions as a chaperone in the production of the protease.</title>
        <authorList>
            <person name="Nomura T."/>
            <person name="Fujii Y."/>
            <person name="Yamanaka H."/>
            <person name="Kobayashi H."/>
            <person name="Okamoto K."/>
        </authorList>
    </citation>
    <scope>ACTIVITY REGULATION</scope>
    <scope>INTERACTION WITH ORF2</scope>
    <scope>SUBCELLULAR LOCATION</scope>
</reference>
<reference key="4">
    <citation type="journal article" date="2006" name="FEMS Microbiol. Lett.">
        <title>Cleavage specificity of the serine protease of Aeromonas sobria, a member of the kexin family of subtilases.</title>
        <authorList>
            <person name="Kobayashi H."/>
            <person name="Takahashi E."/>
            <person name="Oguma K."/>
            <person name="Fujii Y."/>
            <person name="Yamanaka H."/>
            <person name="Negishi T."/>
            <person name="Arimoto-Kobayashi S."/>
            <person name="Tsuji T."/>
            <person name="Okamoto K."/>
        </authorList>
    </citation>
    <scope>FUNCTION</scope>
    <scope>CATALYTIC ACTIVITY</scope>
    <source>
        <strain>288</strain>
    </source>
</reference>
<reference key="5">
    <citation type="journal article" date="2006" name="J. Immunol.">
        <title>Induction of vascular leakage and blood pressure lowering through kinin release by a serine proteinase from Aeromonas sobria.</title>
        <authorList>
            <person name="Imamura T."/>
            <person name="Kobayashi H."/>
            <person name="Khan R."/>
            <person name="Nitta H."/>
            <person name="Okamoto K."/>
        </authorList>
    </citation>
    <scope>FUNCTION</scope>
    <source>
        <strain>T94</strain>
    </source>
</reference>
<reference key="6">
    <citation type="journal article" date="2007" name="FEBS Lett.">
        <title>Activation of prothrombin by ASP, a serine protease released from Aeromonas sobria.</title>
        <authorList>
            <person name="Nitta H."/>
            <person name="Kobayashi H."/>
            <person name="Irie A."/>
            <person name="Baba H."/>
            <person name="Okamoto K."/>
            <person name="Imamura T."/>
        </authorList>
    </citation>
    <scope>FUNCTION</scope>
    <scope>CATALYTIC ACTIVITY</scope>
</reference>
<reference key="7">
    <citation type="journal article" date="2008" name="FEMS Microbiol. Lett.">
        <title>Impaired plasma clottability induction through fibrinogen degradation by ASP, a serine protease released from Aeromonas sobria.</title>
        <authorList>
            <person name="Imamura T."/>
            <person name="Nitta H."/>
            <person name="Wada Y."/>
            <person name="Kobayashi H."/>
            <person name="Okamoto K."/>
        </authorList>
    </citation>
    <scope>FUNCTION</scope>
    <scope>CATALYTIC ACTIVITY</scope>
    <scope>SUBCELLULAR LOCATION</scope>
    <scope>DISRUPTION PHENOTYPE</scope>
    <source>
        <strain>288</strain>
    </source>
</reference>
<reference key="8">
    <citation type="journal article" date="2008" name="J. Immunol.">
        <title>Production of C5a by ASP, a serine protease released from Aeromonas sobria.</title>
        <authorList>
            <person name="Nitta H."/>
            <person name="Imamura T."/>
            <person name="Wada Y."/>
            <person name="Irie A."/>
            <person name="Kobayashi H."/>
            <person name="Okamoto K."/>
            <person name="Baba H."/>
        </authorList>
    </citation>
    <scope>FUNCTION</scope>
</reference>
<reference key="9">
    <citation type="journal article" date="2012" name="Biol. Chem.">
        <title>Inhibition of Aeromonas sobria serine protease (ASP) by alpha2-macroglobulin.</title>
        <authorList>
            <person name="Murakami Y."/>
            <person name="Wada Y."/>
            <person name="Kobayashi H."/>
            <person name="Irie A."/>
            <person name="Hasegawa M."/>
            <person name="Yamanaka H."/>
            <person name="Okamoto K."/>
            <person name="Eto M."/>
            <person name="Imamura T."/>
        </authorList>
    </citation>
    <scope>ACTIVITY REGULATION</scope>
</reference>
<reference evidence="21" key="10">
    <citation type="journal article" date="2009" name="J. Biol. Chem.">
        <title>Structural basis for the kexin-like serine protease from Aeromonas sobria as sepsis-causing factor.</title>
        <authorList>
            <person name="Kobayashi H."/>
            <person name="Utsunomiya H."/>
            <person name="Yamanaka H."/>
            <person name="Sei Y."/>
            <person name="Katunuma N."/>
            <person name="Okamoto K."/>
            <person name="Tsuge H."/>
        </authorList>
    </citation>
    <scope>X-RAY CRYSTALLOGRAPHY (1.65 ANGSTROMS) OF 25-624 IN COMPLEX WITH CALCIUM</scope>
    <scope>SEQUENCE REVISION</scope>
    <scope>IDENTIFICATION BY MASS SPECTROMETRY</scope>
    <scope>FUNCTION</scope>
    <scope>CATALYTIC ACTIVITY</scope>
    <scope>COFACTOR</scope>
    <scope>SUBCELLULAR LOCATION</scope>
    <scope>DOMAIN</scope>
    <scope>DISULFIDE BOND</scope>
    <source>
        <strain>T94</strain>
    </source>
</reference>
<reference evidence="22" key="11">
    <citation type="journal article" date="2015" name="J. Biol. Chem.">
        <title>Structural basis for action of the external chaperone for a propeptide-deficient serine protease from Aeromonas sobria.</title>
        <authorList>
            <person name="Kobayashi H."/>
            <person name="Yoshida T."/>
            <person name="Miyakawa T."/>
            <person name="Tashiro M."/>
            <person name="Okamoto K."/>
            <person name="Yamanaka H."/>
            <person name="Tanokura M."/>
            <person name="Tsuge H."/>
        </authorList>
    </citation>
    <scope>X-RAY CRYSTALLOGRAPHY (1.41 ANGSTROMS) OF 25-624 IN COMPLEX WITH ORF2 AND CALCIUM</scope>
    <scope>DISULFIDE BONDS</scope>
    <scope>FUNCTION</scope>
    <scope>COFACTOR</scope>
    <scope>ACTIVITY REGULATION</scope>
    <scope>INTERACTION WITH ORF2</scope>
    <scope>SUBCELLULAR LOCATION</scope>
</reference>